<reference key="1">
    <citation type="journal article" date="1993" name="Mol. Microbiol.">
        <title>Sequence and molecular analysis of the nifL gene of Azotobacter vinelandii.</title>
        <authorList>
            <person name="Blanco G."/>
            <person name="Drummond M."/>
            <person name="Woodley P."/>
            <person name="Kennedy C."/>
        </authorList>
    </citation>
    <scope>NUCLEOTIDE SEQUENCE [GENOMIC DNA]</scope>
    <source>
        <strain>ATCC 13705 / OP1 / DSM 366 / NCIMB 11614 / LMG 3878 / UW</strain>
    </source>
</reference>
<reference key="2">
    <citation type="journal article" date="1988" name="Mol. Microbiol.">
        <title>Nucleotide sequence and mutagenesis of the nifA gene from Azotobacter vinelandii.</title>
        <authorList>
            <person name="Bennet L.T."/>
            <person name="Cannon F."/>
            <person name="Dean D.R."/>
        </authorList>
    </citation>
    <scope>NUCLEOTIDE SEQUENCE [GENOMIC DNA] OF 417-519</scope>
    <source>
        <strain>ATCC 13705 / OP1 / DSM 366 / NCIMB 11614 / LMG 3878 / UW</strain>
    </source>
</reference>
<reference key="3">
    <citation type="journal article" date="1998" name="Biochem. J.">
        <title>Electron donation to the flavoprotein NifL, a redox-sensing transcriptional regulator.</title>
        <authorList>
            <person name="Macheroux P."/>
            <person name="Hill S."/>
            <person name="Austin S."/>
            <person name="Eydmann T."/>
            <person name="Jones T."/>
            <person name="Kim S.-O."/>
            <person name="Poole R."/>
            <person name="Dixon R."/>
        </authorList>
    </citation>
    <scope>CHARACTERIZATION</scope>
</reference>
<reference key="4">
    <citation type="journal article" date="1996" name="Proc. Natl. Acad. Sci. U.S.A.">
        <title>Azotobacter vinelandii NIFL is a flavoprotein that modulates transcriptional activation of nitrogen-fixation genes via a redox-sensitive switch.</title>
        <authorList>
            <person name="Hill S."/>
            <person name="Austin S."/>
            <person name="Eydmann T."/>
            <person name="Jones T."/>
            <person name="Dixon R."/>
        </authorList>
    </citation>
    <scope>FAD AND ADP-BINDING</scope>
</reference>
<reference key="5">
    <citation type="journal article" date="1998" name="Mol. Microbiol.">
        <title>The redox- and fixed nitrogen-responsive regulatory protein NIFL from Azotobacter vinelandii comprises discrete flavin and nucleotide-binding domains.</title>
        <authorList>
            <person name="Soederbaeck E."/>
            <person name="Reyes-Ramirez F."/>
            <person name="Eydmann T."/>
            <person name="Austin S."/>
            <person name="Hill S."/>
            <person name="Dixon R."/>
        </authorList>
    </citation>
    <scope>FAD AND ADP-BINDING</scope>
</reference>
<reference key="6">
    <citation type="journal article" date="2001" name="Acta Crystallogr. D">
        <title>Crystallization and preliminary crystallographic data of the PAS domain of the NifL protein from Azotobacter vinelandii.</title>
        <authorList>
            <person name="Hefti M."/>
            <person name="Hendle J."/>
            <person name="Enroth C."/>
            <person name="Vervoort J."/>
            <person name="Tucker P.A."/>
        </authorList>
    </citation>
    <scope>CRYSTALLIZATION</scope>
</reference>
<proteinExistence type="evidence at protein level"/>
<gene>
    <name type="primary">nifL</name>
</gene>
<dbReference type="EC" id="2.7.13.3"/>
<dbReference type="EMBL" id="X64832">
    <property type="protein sequence ID" value="CAA46044.1"/>
    <property type="molecule type" value="Genomic_DNA"/>
</dbReference>
<dbReference type="EMBL" id="Y00554">
    <property type="protein sequence ID" value="CAA68632.1"/>
    <property type="molecule type" value="Genomic_DNA"/>
</dbReference>
<dbReference type="PIR" id="S19883">
    <property type="entry name" value="S19883"/>
</dbReference>
<dbReference type="PDB" id="2GJ3">
    <property type="method" value="X-ray"/>
    <property type="resolution" value="1.04 A"/>
    <property type="chains" value="A/B=21-140"/>
</dbReference>
<dbReference type="PDBsum" id="2GJ3"/>
<dbReference type="SASBDB" id="P30663"/>
<dbReference type="SMR" id="P30663"/>
<dbReference type="IntAct" id="P30663">
    <property type="interactions" value="1"/>
</dbReference>
<dbReference type="EvolutionaryTrace" id="P30663"/>
<dbReference type="GO" id="GO:0005524">
    <property type="term" value="F:ATP binding"/>
    <property type="evidence" value="ECO:0007669"/>
    <property type="project" value="UniProtKB-KW"/>
</dbReference>
<dbReference type="GO" id="GO:0004673">
    <property type="term" value="F:protein histidine kinase activity"/>
    <property type="evidence" value="ECO:0007669"/>
    <property type="project" value="UniProtKB-EC"/>
</dbReference>
<dbReference type="GO" id="GO:0009399">
    <property type="term" value="P:nitrogen fixation"/>
    <property type="evidence" value="ECO:0007669"/>
    <property type="project" value="UniProtKB-KW"/>
</dbReference>
<dbReference type="GO" id="GO:0000160">
    <property type="term" value="P:phosphorelay signal transduction system"/>
    <property type="evidence" value="ECO:0007669"/>
    <property type="project" value="UniProtKB-KW"/>
</dbReference>
<dbReference type="GO" id="GO:0006355">
    <property type="term" value="P:regulation of DNA-templated transcription"/>
    <property type="evidence" value="ECO:0000314"/>
    <property type="project" value="CACAO"/>
</dbReference>
<dbReference type="CDD" id="cd00130">
    <property type="entry name" value="PAS"/>
    <property type="match status" value="2"/>
</dbReference>
<dbReference type="Gene3D" id="3.30.565.10">
    <property type="entry name" value="Histidine kinase-like ATPase, C-terminal domain"/>
    <property type="match status" value="1"/>
</dbReference>
<dbReference type="Gene3D" id="3.30.450.20">
    <property type="entry name" value="PAS domain"/>
    <property type="match status" value="2"/>
</dbReference>
<dbReference type="InterPro" id="IPR036890">
    <property type="entry name" value="HATPase_C_sf"/>
</dbReference>
<dbReference type="InterPro" id="IPR005467">
    <property type="entry name" value="His_kinase_dom"/>
</dbReference>
<dbReference type="InterPro" id="IPR014285">
    <property type="entry name" value="N_fixation_neg-reg_NifL"/>
</dbReference>
<dbReference type="InterPro" id="IPR001610">
    <property type="entry name" value="PAC"/>
</dbReference>
<dbReference type="InterPro" id="IPR000014">
    <property type="entry name" value="PAS"/>
</dbReference>
<dbReference type="InterPro" id="IPR000700">
    <property type="entry name" value="PAS-assoc_C"/>
</dbReference>
<dbReference type="InterPro" id="IPR035965">
    <property type="entry name" value="PAS-like_dom_sf"/>
</dbReference>
<dbReference type="InterPro" id="IPR013767">
    <property type="entry name" value="PAS_fold"/>
</dbReference>
<dbReference type="InterPro" id="IPR004358">
    <property type="entry name" value="Sig_transdc_His_kin-like_C"/>
</dbReference>
<dbReference type="NCBIfam" id="TIGR02938">
    <property type="entry name" value="nifL_nitrog"/>
    <property type="match status" value="1"/>
</dbReference>
<dbReference type="NCBIfam" id="TIGR00229">
    <property type="entry name" value="sensory_box"/>
    <property type="match status" value="1"/>
</dbReference>
<dbReference type="PANTHER" id="PTHR43065:SF10">
    <property type="entry name" value="PEROXIDE STRESS-ACTIVATED HISTIDINE KINASE MAK3"/>
    <property type="match status" value="1"/>
</dbReference>
<dbReference type="PANTHER" id="PTHR43065">
    <property type="entry name" value="SENSOR HISTIDINE KINASE"/>
    <property type="match status" value="1"/>
</dbReference>
<dbReference type="Pfam" id="PF02518">
    <property type="entry name" value="HATPase_c"/>
    <property type="match status" value="1"/>
</dbReference>
<dbReference type="Pfam" id="PF00989">
    <property type="entry name" value="PAS"/>
    <property type="match status" value="2"/>
</dbReference>
<dbReference type="PRINTS" id="PR00344">
    <property type="entry name" value="BCTRLSENSOR"/>
</dbReference>
<dbReference type="SMART" id="SM00387">
    <property type="entry name" value="HATPase_c"/>
    <property type="match status" value="1"/>
</dbReference>
<dbReference type="SMART" id="SM00086">
    <property type="entry name" value="PAC"/>
    <property type="match status" value="1"/>
</dbReference>
<dbReference type="SMART" id="SM00091">
    <property type="entry name" value="PAS"/>
    <property type="match status" value="2"/>
</dbReference>
<dbReference type="SUPFAM" id="SSF55874">
    <property type="entry name" value="ATPase domain of HSP90 chaperone/DNA topoisomerase II/histidine kinase"/>
    <property type="match status" value="1"/>
</dbReference>
<dbReference type="SUPFAM" id="SSF55785">
    <property type="entry name" value="PYP-like sensor domain (PAS domain)"/>
    <property type="match status" value="2"/>
</dbReference>
<dbReference type="PROSITE" id="PS50109">
    <property type="entry name" value="HIS_KIN"/>
    <property type="match status" value="1"/>
</dbReference>
<dbReference type="PROSITE" id="PS50113">
    <property type="entry name" value="PAC"/>
    <property type="match status" value="1"/>
</dbReference>
<dbReference type="PROSITE" id="PS50112">
    <property type="entry name" value="PAS"/>
    <property type="match status" value="1"/>
</dbReference>
<evidence type="ECO:0000255" key="1">
    <source>
        <dbReference type="PROSITE-ProRule" id="PRU00107"/>
    </source>
</evidence>
<evidence type="ECO:0000255" key="2">
    <source>
        <dbReference type="PROSITE-ProRule" id="PRU00140"/>
    </source>
</evidence>
<evidence type="ECO:0000255" key="3">
    <source>
        <dbReference type="PROSITE-ProRule" id="PRU00141"/>
    </source>
</evidence>
<evidence type="ECO:0007829" key="4">
    <source>
        <dbReference type="PDB" id="2GJ3"/>
    </source>
</evidence>
<protein>
    <recommendedName>
        <fullName>Nitrogen fixation regulatory protein</fullName>
        <ecNumber>2.7.13.3</ecNumber>
    </recommendedName>
</protein>
<accession>P30663</accession>
<name>NIFL_AZOVI</name>
<feature type="chain" id="PRO_0000074815" description="Nitrogen fixation regulatory protein">
    <location>
        <begin position="1"/>
        <end position="519"/>
    </location>
</feature>
<feature type="domain" description="PAS 1" evidence="2">
    <location>
        <begin position="23"/>
        <end position="93"/>
    </location>
</feature>
<feature type="domain" description="PAC" evidence="3">
    <location>
        <begin position="94"/>
        <end position="148"/>
    </location>
</feature>
<feature type="domain" description="PAS 2" evidence="2">
    <location>
        <begin position="151"/>
        <end position="217"/>
    </location>
</feature>
<feature type="domain" description="Histidine kinase" evidence="1">
    <location>
        <begin position="302"/>
        <end position="517"/>
    </location>
</feature>
<feature type="modified residue" description="Phosphohistidine; by autocatalysis" evidence="1">
    <location>
        <position position="305"/>
    </location>
</feature>
<feature type="helix" evidence="4">
    <location>
        <begin position="24"/>
        <end position="33"/>
    </location>
</feature>
<feature type="strand" evidence="4">
    <location>
        <begin position="35"/>
        <end position="41"/>
    </location>
</feature>
<feature type="strand" evidence="4">
    <location>
        <begin position="46"/>
        <end position="50"/>
    </location>
</feature>
<feature type="helix" evidence="4">
    <location>
        <begin position="52"/>
        <end position="58"/>
    </location>
</feature>
<feature type="helix" evidence="4">
    <location>
        <begin position="64"/>
        <end position="67"/>
    </location>
</feature>
<feature type="helix" evidence="4">
    <location>
        <begin position="70"/>
        <end position="73"/>
    </location>
</feature>
<feature type="helix" evidence="4">
    <location>
        <begin position="80"/>
        <end position="91"/>
    </location>
</feature>
<feature type="strand" evidence="4">
    <location>
        <begin position="96"/>
        <end position="103"/>
    </location>
</feature>
<feature type="strand" evidence="4">
    <location>
        <begin position="109"/>
        <end position="120"/>
    </location>
</feature>
<feature type="strand" evidence="4">
    <location>
        <begin position="126"/>
        <end position="135"/>
    </location>
</feature>
<keyword id="KW-0002">3D-structure</keyword>
<keyword id="KW-0067">ATP-binding</keyword>
<keyword id="KW-0274">FAD</keyword>
<keyword id="KW-0285">Flavoprotein</keyword>
<keyword id="KW-0418">Kinase</keyword>
<keyword id="KW-0535">Nitrogen fixation</keyword>
<keyword id="KW-0547">Nucleotide-binding</keyword>
<keyword id="KW-0597">Phosphoprotein</keyword>
<keyword id="KW-0677">Repeat</keyword>
<keyword id="KW-0804">Transcription</keyword>
<keyword id="KW-0805">Transcription regulation</keyword>
<keyword id="KW-0808">Transferase</keyword>
<keyword id="KW-0902">Two-component regulatory system</keyword>
<organism>
    <name type="scientific">Azotobacter vinelandii</name>
    <dbReference type="NCBI Taxonomy" id="354"/>
    <lineage>
        <taxon>Bacteria</taxon>
        <taxon>Pseudomonadati</taxon>
        <taxon>Pseudomonadota</taxon>
        <taxon>Gammaproteobacteria</taxon>
        <taxon>Pseudomonadales</taxon>
        <taxon>Pseudomonadaceae</taxon>
        <taxon>Azotobacter</taxon>
    </lineage>
</organism>
<sequence>MTPANPTLSNEPQAPHAESDELLPEIFRQTVEHAPIAISITDLKANILYANRAFRTITGYGSEEVLGKNESILSNGTTPRLVYQALWGRLAQKKPWSGVLVNRRKDKTLYLAELTVAPVLNEAGETIYYLGMHRDTSELHELEQRVNNQRLMIEAVVNAAPAAMVVLDRQHRVMLSNPSFCRLARDLVEDGSSESLVALLRENLAAPFETLENQGSAFSGKEISFDLGGRSPRWLSCHGRAIHIENEQAHVFFAPTEERYLLLTINDISELRQKQQDSRLNALKALMAEEELLEGMRETFNAAIHRLQGPVNLISAAMRMLERRLGDKAGNDPVLSAMREASTAGMEALENLSGSIPVRMAESKMPVNLNQLIREVITLCTDQLLAQGIVVDWQPALRLPWVMGGESSQRSMIKHLVDNAIESMSQNQVSRRELFISTRVENHLVRMEITDSGPGIPPDLVLKVFEPFFSTKPPHRVGRGMGLPVVQEIVAKHAGMVHVDTDYREGCRIVVELPFSAST</sequence>
<comment type="function">
    <text>Required for the inhibition of NifA activity in response to oxygen and low level of fixed nitrogen.</text>
</comment>
<comment type="catalytic activity">
    <reaction>
        <text>ATP + protein L-histidine = ADP + protein N-phospho-L-histidine.</text>
        <dbReference type="EC" id="2.7.13.3"/>
    </reaction>
</comment>
<comment type="cofactor">
    <cofactor>
        <name>FAD</name>
        <dbReference type="ChEBI" id="CHEBI:57692"/>
    </cofactor>
</comment>
<comment type="biophysicochemical properties">
    <redoxPotential>
        <text>E(0) is -226 mV.</text>
    </redoxPotential>
</comment>